<comment type="function">
    <text evidence="1">Involved in the gluconeogenesis. Catalyzes stereospecifically the conversion of dihydroxyacetone phosphate (DHAP) to D-glyceraldehyde-3-phosphate (G3P).</text>
</comment>
<comment type="catalytic activity">
    <reaction evidence="1">
        <text>D-glyceraldehyde 3-phosphate = dihydroxyacetone phosphate</text>
        <dbReference type="Rhea" id="RHEA:18585"/>
        <dbReference type="ChEBI" id="CHEBI:57642"/>
        <dbReference type="ChEBI" id="CHEBI:59776"/>
        <dbReference type="EC" id="5.3.1.1"/>
    </reaction>
</comment>
<comment type="pathway">
    <text evidence="1">Carbohydrate biosynthesis; gluconeogenesis.</text>
</comment>
<comment type="pathway">
    <text evidence="1">Carbohydrate degradation; glycolysis; D-glyceraldehyde 3-phosphate from glycerone phosphate: step 1/1.</text>
</comment>
<comment type="subunit">
    <text evidence="1">Homodimer.</text>
</comment>
<comment type="subcellular location">
    <subcellularLocation>
        <location evidence="1">Cytoplasm</location>
    </subcellularLocation>
</comment>
<comment type="similarity">
    <text evidence="1">Belongs to the triosephosphate isomerase family.</text>
</comment>
<gene>
    <name evidence="1" type="primary">tpiA</name>
    <name type="ordered locus">Cthe_0139</name>
</gene>
<reference key="1">
    <citation type="submission" date="2007-02" db="EMBL/GenBank/DDBJ databases">
        <title>Complete sequence of Clostridium thermocellum ATCC 27405.</title>
        <authorList>
            <consortium name="US DOE Joint Genome Institute"/>
            <person name="Copeland A."/>
            <person name="Lucas S."/>
            <person name="Lapidus A."/>
            <person name="Barry K."/>
            <person name="Detter J.C."/>
            <person name="Glavina del Rio T."/>
            <person name="Hammon N."/>
            <person name="Israni S."/>
            <person name="Dalin E."/>
            <person name="Tice H."/>
            <person name="Pitluck S."/>
            <person name="Chertkov O."/>
            <person name="Brettin T."/>
            <person name="Bruce D."/>
            <person name="Han C."/>
            <person name="Tapia R."/>
            <person name="Gilna P."/>
            <person name="Schmutz J."/>
            <person name="Larimer F."/>
            <person name="Land M."/>
            <person name="Hauser L."/>
            <person name="Kyrpides N."/>
            <person name="Mikhailova N."/>
            <person name="Wu J.H.D."/>
            <person name="Newcomb M."/>
            <person name="Richardson P."/>
        </authorList>
    </citation>
    <scope>NUCLEOTIDE SEQUENCE [LARGE SCALE GENOMIC DNA]</scope>
    <source>
        <strain>ATCC 27405 / DSM 1237 / JCM 9322 / NBRC 103400 / NCIMB 10682 / NRRL B-4536 / VPI 7372</strain>
    </source>
</reference>
<sequence length="251" mass="27134">MSRKVIAAGNWKMNKTPKEAVEFVQALKGRVADADTEVVVGVPFVCLPGVVEAAKGSNIKVAAQNMHWEEKGAFTGEVSGPMLAELGVDYVIIGHSERRQYFGETDETVNKKVHAAFKYGLKPIICVGESLTQREQGVTAELVRYQVKIALLGLSAEQVKEAVIAYEPIWAIGTGKTATNEQAEEVCGIIRECIKELYGQDVAEAIRIQYGGSVNAANAAELFNMPNIDGGLVGGASLKLDDFEKIAKYNK</sequence>
<organism>
    <name type="scientific">Acetivibrio thermocellus (strain ATCC 27405 / DSM 1237 / JCM 9322 / NBRC 103400 / NCIMB 10682 / NRRL B-4536 / VPI 7372)</name>
    <name type="common">Clostridium thermocellum</name>
    <dbReference type="NCBI Taxonomy" id="203119"/>
    <lineage>
        <taxon>Bacteria</taxon>
        <taxon>Bacillati</taxon>
        <taxon>Bacillota</taxon>
        <taxon>Clostridia</taxon>
        <taxon>Eubacteriales</taxon>
        <taxon>Oscillospiraceae</taxon>
        <taxon>Acetivibrio</taxon>
    </lineage>
</organism>
<accession>A3DBQ1</accession>
<dbReference type="EC" id="5.3.1.1" evidence="1"/>
<dbReference type="EMBL" id="CP000568">
    <property type="protein sequence ID" value="ABN51380.1"/>
    <property type="molecule type" value="Genomic_DNA"/>
</dbReference>
<dbReference type="RefSeq" id="WP_003512174.1">
    <property type="nucleotide sequence ID" value="NC_009012.1"/>
</dbReference>
<dbReference type="SMR" id="A3DBQ1"/>
<dbReference type="STRING" id="203119.Cthe_0139"/>
<dbReference type="GeneID" id="35803570"/>
<dbReference type="KEGG" id="cth:Cthe_0139"/>
<dbReference type="eggNOG" id="COG0149">
    <property type="taxonomic scope" value="Bacteria"/>
</dbReference>
<dbReference type="HOGENOM" id="CLU_024251_2_3_9"/>
<dbReference type="OrthoDB" id="9809429at2"/>
<dbReference type="UniPathway" id="UPA00109">
    <property type="reaction ID" value="UER00189"/>
</dbReference>
<dbReference type="UniPathway" id="UPA00138"/>
<dbReference type="Proteomes" id="UP000002145">
    <property type="component" value="Chromosome"/>
</dbReference>
<dbReference type="GO" id="GO:0005829">
    <property type="term" value="C:cytosol"/>
    <property type="evidence" value="ECO:0007669"/>
    <property type="project" value="TreeGrafter"/>
</dbReference>
<dbReference type="GO" id="GO:0004807">
    <property type="term" value="F:triose-phosphate isomerase activity"/>
    <property type="evidence" value="ECO:0007669"/>
    <property type="project" value="UniProtKB-UniRule"/>
</dbReference>
<dbReference type="GO" id="GO:0006094">
    <property type="term" value="P:gluconeogenesis"/>
    <property type="evidence" value="ECO:0007669"/>
    <property type="project" value="UniProtKB-UniRule"/>
</dbReference>
<dbReference type="GO" id="GO:0046166">
    <property type="term" value="P:glyceraldehyde-3-phosphate biosynthetic process"/>
    <property type="evidence" value="ECO:0007669"/>
    <property type="project" value="TreeGrafter"/>
</dbReference>
<dbReference type="GO" id="GO:0019563">
    <property type="term" value="P:glycerol catabolic process"/>
    <property type="evidence" value="ECO:0007669"/>
    <property type="project" value="TreeGrafter"/>
</dbReference>
<dbReference type="GO" id="GO:0006096">
    <property type="term" value="P:glycolytic process"/>
    <property type="evidence" value="ECO:0007669"/>
    <property type="project" value="UniProtKB-UniRule"/>
</dbReference>
<dbReference type="CDD" id="cd00311">
    <property type="entry name" value="TIM"/>
    <property type="match status" value="1"/>
</dbReference>
<dbReference type="FunFam" id="3.20.20.70:FF:000016">
    <property type="entry name" value="Triosephosphate isomerase"/>
    <property type="match status" value="1"/>
</dbReference>
<dbReference type="Gene3D" id="3.20.20.70">
    <property type="entry name" value="Aldolase class I"/>
    <property type="match status" value="1"/>
</dbReference>
<dbReference type="HAMAP" id="MF_00147_B">
    <property type="entry name" value="TIM_B"/>
    <property type="match status" value="1"/>
</dbReference>
<dbReference type="InterPro" id="IPR013785">
    <property type="entry name" value="Aldolase_TIM"/>
</dbReference>
<dbReference type="InterPro" id="IPR035990">
    <property type="entry name" value="TIM_sf"/>
</dbReference>
<dbReference type="InterPro" id="IPR022896">
    <property type="entry name" value="TrioseP_Isoase_bac/euk"/>
</dbReference>
<dbReference type="InterPro" id="IPR000652">
    <property type="entry name" value="Triosephosphate_isomerase"/>
</dbReference>
<dbReference type="InterPro" id="IPR020861">
    <property type="entry name" value="Triosephosphate_isomerase_AS"/>
</dbReference>
<dbReference type="NCBIfam" id="TIGR00419">
    <property type="entry name" value="tim"/>
    <property type="match status" value="1"/>
</dbReference>
<dbReference type="PANTHER" id="PTHR21139">
    <property type="entry name" value="TRIOSEPHOSPHATE ISOMERASE"/>
    <property type="match status" value="1"/>
</dbReference>
<dbReference type="PANTHER" id="PTHR21139:SF42">
    <property type="entry name" value="TRIOSEPHOSPHATE ISOMERASE"/>
    <property type="match status" value="1"/>
</dbReference>
<dbReference type="Pfam" id="PF00121">
    <property type="entry name" value="TIM"/>
    <property type="match status" value="1"/>
</dbReference>
<dbReference type="SUPFAM" id="SSF51351">
    <property type="entry name" value="Triosephosphate isomerase (TIM)"/>
    <property type="match status" value="1"/>
</dbReference>
<dbReference type="PROSITE" id="PS00171">
    <property type="entry name" value="TIM_1"/>
    <property type="match status" value="1"/>
</dbReference>
<dbReference type="PROSITE" id="PS51440">
    <property type="entry name" value="TIM_2"/>
    <property type="match status" value="1"/>
</dbReference>
<protein>
    <recommendedName>
        <fullName evidence="1">Triosephosphate isomerase</fullName>
        <shortName evidence="1">TIM</shortName>
        <shortName evidence="1">TPI</shortName>
        <ecNumber evidence="1">5.3.1.1</ecNumber>
    </recommendedName>
    <alternativeName>
        <fullName evidence="1">Triose-phosphate isomerase</fullName>
    </alternativeName>
</protein>
<name>TPIS_ACET2</name>
<proteinExistence type="inferred from homology"/>
<keyword id="KW-0963">Cytoplasm</keyword>
<keyword id="KW-0312">Gluconeogenesis</keyword>
<keyword id="KW-0324">Glycolysis</keyword>
<keyword id="KW-0413">Isomerase</keyword>
<keyword id="KW-1185">Reference proteome</keyword>
<feature type="chain" id="PRO_0000307452" description="Triosephosphate isomerase">
    <location>
        <begin position="1"/>
        <end position="251"/>
    </location>
</feature>
<feature type="active site" description="Electrophile" evidence="1">
    <location>
        <position position="95"/>
    </location>
</feature>
<feature type="active site" description="Proton acceptor" evidence="1">
    <location>
        <position position="167"/>
    </location>
</feature>
<feature type="binding site" evidence="1">
    <location>
        <begin position="10"/>
        <end position="12"/>
    </location>
    <ligand>
        <name>substrate</name>
    </ligand>
</feature>
<feature type="binding site" evidence="1">
    <location>
        <position position="173"/>
    </location>
    <ligand>
        <name>substrate</name>
    </ligand>
</feature>
<feature type="binding site" evidence="1">
    <location>
        <position position="213"/>
    </location>
    <ligand>
        <name>substrate</name>
    </ligand>
</feature>
<feature type="binding site" evidence="1">
    <location>
        <begin position="234"/>
        <end position="235"/>
    </location>
    <ligand>
        <name>substrate</name>
    </ligand>
</feature>
<evidence type="ECO:0000255" key="1">
    <source>
        <dbReference type="HAMAP-Rule" id="MF_00147"/>
    </source>
</evidence>